<keyword id="KW-0028">Amino-acid biosynthesis</keyword>
<keyword id="KW-0055">Arginine biosynthesis</keyword>
<keyword id="KW-0067">ATP-binding</keyword>
<keyword id="KW-0315">Glutamine amidotransferase</keyword>
<keyword id="KW-0436">Ligase</keyword>
<keyword id="KW-0547">Nucleotide-binding</keyword>
<keyword id="KW-0665">Pyrimidine biosynthesis</keyword>
<protein>
    <recommendedName>
        <fullName evidence="1">Carbamoyl phosphate synthase small chain</fullName>
        <ecNumber evidence="1">6.3.5.5</ecNumber>
    </recommendedName>
    <alternativeName>
        <fullName evidence="1">Carbamoyl phosphate synthetase glutamine chain</fullName>
    </alternativeName>
</protein>
<name>CARA_BRUSI</name>
<evidence type="ECO:0000255" key="1">
    <source>
        <dbReference type="HAMAP-Rule" id="MF_01209"/>
    </source>
</evidence>
<organism>
    <name type="scientific">Brucella suis (strain ATCC 23445 / NCTC 10510)</name>
    <dbReference type="NCBI Taxonomy" id="470137"/>
    <lineage>
        <taxon>Bacteria</taxon>
        <taxon>Pseudomonadati</taxon>
        <taxon>Pseudomonadota</taxon>
        <taxon>Alphaproteobacteria</taxon>
        <taxon>Hyphomicrobiales</taxon>
        <taxon>Brucellaceae</taxon>
        <taxon>Brucella/Ochrobactrum group</taxon>
        <taxon>Brucella</taxon>
    </lineage>
</organism>
<accession>B0CHS0</accession>
<proteinExistence type="inferred from homology"/>
<reference key="1">
    <citation type="submission" date="2007-12" db="EMBL/GenBank/DDBJ databases">
        <title>Brucella suis ATCC 23445 whole genome shotgun sequencing project.</title>
        <authorList>
            <person name="Setubal J.C."/>
            <person name="Bowns C."/>
            <person name="Boyle S."/>
            <person name="Crasta O.R."/>
            <person name="Czar M.J."/>
            <person name="Dharmanolla C."/>
            <person name="Gillespie J.J."/>
            <person name="Kenyon R.W."/>
            <person name="Lu J."/>
            <person name="Mane S."/>
            <person name="Mohapatra S."/>
            <person name="Nagrani S."/>
            <person name="Purkayastha A."/>
            <person name="Rajasimha H.K."/>
            <person name="Shallom J.M."/>
            <person name="Shallom S."/>
            <person name="Shukla M."/>
            <person name="Snyder E.E."/>
            <person name="Sobral B.W."/>
            <person name="Wattam A.R."/>
            <person name="Will R."/>
            <person name="Williams K."/>
            <person name="Yoo H."/>
            <person name="Bruce D."/>
            <person name="Detter C."/>
            <person name="Munk C."/>
            <person name="Brettin T.S."/>
        </authorList>
    </citation>
    <scope>NUCLEOTIDE SEQUENCE [LARGE SCALE GENOMIC DNA]</scope>
    <source>
        <strain>ATCC 23445 / NCTC 10510</strain>
    </source>
</reference>
<feature type="chain" id="PRO_1000138857" description="Carbamoyl phosphate synthase small chain">
    <location>
        <begin position="1"/>
        <end position="407"/>
    </location>
</feature>
<feature type="domain" description="Glutamine amidotransferase type-1" evidence="1">
    <location>
        <begin position="209"/>
        <end position="397"/>
    </location>
</feature>
<feature type="region of interest" description="CPSase" evidence="1">
    <location>
        <begin position="1"/>
        <end position="205"/>
    </location>
</feature>
<feature type="active site" description="Nucleophile" evidence="1">
    <location>
        <position position="286"/>
    </location>
</feature>
<feature type="active site" evidence="1">
    <location>
        <position position="370"/>
    </location>
</feature>
<feature type="active site" evidence="1">
    <location>
        <position position="372"/>
    </location>
</feature>
<feature type="binding site" evidence="1">
    <location>
        <position position="60"/>
    </location>
    <ligand>
        <name>L-glutamine</name>
        <dbReference type="ChEBI" id="CHEBI:58359"/>
    </ligand>
</feature>
<feature type="binding site" evidence="1">
    <location>
        <position position="257"/>
    </location>
    <ligand>
        <name>L-glutamine</name>
        <dbReference type="ChEBI" id="CHEBI:58359"/>
    </ligand>
</feature>
<feature type="binding site" evidence="1">
    <location>
        <position position="259"/>
    </location>
    <ligand>
        <name>L-glutamine</name>
        <dbReference type="ChEBI" id="CHEBI:58359"/>
    </ligand>
</feature>
<feature type="binding site" evidence="1">
    <location>
        <position position="287"/>
    </location>
    <ligand>
        <name>L-glutamine</name>
        <dbReference type="ChEBI" id="CHEBI:58359"/>
    </ligand>
</feature>
<feature type="binding site" evidence="1">
    <location>
        <position position="290"/>
    </location>
    <ligand>
        <name>L-glutamine</name>
        <dbReference type="ChEBI" id="CHEBI:58359"/>
    </ligand>
</feature>
<feature type="binding site" evidence="1">
    <location>
        <position position="328"/>
    </location>
    <ligand>
        <name>L-glutamine</name>
        <dbReference type="ChEBI" id="CHEBI:58359"/>
    </ligand>
</feature>
<feature type="binding site" evidence="1">
    <location>
        <position position="330"/>
    </location>
    <ligand>
        <name>L-glutamine</name>
        <dbReference type="ChEBI" id="CHEBI:58359"/>
    </ligand>
</feature>
<feature type="binding site" evidence="1">
    <location>
        <position position="331"/>
    </location>
    <ligand>
        <name>L-glutamine</name>
        <dbReference type="ChEBI" id="CHEBI:58359"/>
    </ligand>
</feature>
<gene>
    <name evidence="1" type="primary">carA</name>
    <name type="ordered locus">BSUIS_A1539</name>
</gene>
<dbReference type="EC" id="6.3.5.5" evidence="1"/>
<dbReference type="EMBL" id="CP000911">
    <property type="protein sequence ID" value="ABY38571.1"/>
    <property type="molecule type" value="Genomic_DNA"/>
</dbReference>
<dbReference type="RefSeq" id="WP_006071174.1">
    <property type="nucleotide sequence ID" value="NC_010169.1"/>
</dbReference>
<dbReference type="SMR" id="B0CHS0"/>
<dbReference type="KEGG" id="bmt:BSUIS_A1539"/>
<dbReference type="HOGENOM" id="CLU_035901_2_2_5"/>
<dbReference type="UniPathway" id="UPA00068">
    <property type="reaction ID" value="UER00171"/>
</dbReference>
<dbReference type="UniPathway" id="UPA00070">
    <property type="reaction ID" value="UER00115"/>
</dbReference>
<dbReference type="Proteomes" id="UP000008545">
    <property type="component" value="Chromosome I"/>
</dbReference>
<dbReference type="GO" id="GO:0005524">
    <property type="term" value="F:ATP binding"/>
    <property type="evidence" value="ECO:0007669"/>
    <property type="project" value="UniProtKB-UniRule"/>
</dbReference>
<dbReference type="GO" id="GO:0004088">
    <property type="term" value="F:carbamoyl-phosphate synthase (glutamine-hydrolyzing) activity"/>
    <property type="evidence" value="ECO:0007669"/>
    <property type="project" value="UniProtKB-UniRule"/>
</dbReference>
<dbReference type="GO" id="GO:0004359">
    <property type="term" value="F:glutaminase activity"/>
    <property type="evidence" value="ECO:0007669"/>
    <property type="project" value="RHEA"/>
</dbReference>
<dbReference type="GO" id="GO:0006207">
    <property type="term" value="P:'de novo' pyrimidine nucleobase biosynthetic process"/>
    <property type="evidence" value="ECO:0007669"/>
    <property type="project" value="InterPro"/>
</dbReference>
<dbReference type="GO" id="GO:0044205">
    <property type="term" value="P:'de novo' UMP biosynthetic process"/>
    <property type="evidence" value="ECO:0007669"/>
    <property type="project" value="UniProtKB-UniRule"/>
</dbReference>
<dbReference type="GO" id="GO:0006541">
    <property type="term" value="P:glutamine metabolic process"/>
    <property type="evidence" value="ECO:0007669"/>
    <property type="project" value="InterPro"/>
</dbReference>
<dbReference type="GO" id="GO:0006526">
    <property type="term" value="P:L-arginine biosynthetic process"/>
    <property type="evidence" value="ECO:0007669"/>
    <property type="project" value="UniProtKB-UniRule"/>
</dbReference>
<dbReference type="CDD" id="cd01744">
    <property type="entry name" value="GATase1_CPSase"/>
    <property type="match status" value="1"/>
</dbReference>
<dbReference type="FunFam" id="3.50.30.20:FF:000001">
    <property type="entry name" value="Carbamoyl-phosphate synthase small chain"/>
    <property type="match status" value="1"/>
</dbReference>
<dbReference type="Gene3D" id="3.40.50.880">
    <property type="match status" value="1"/>
</dbReference>
<dbReference type="Gene3D" id="3.50.30.20">
    <property type="entry name" value="Carbamoyl-phosphate synthase small subunit, N-terminal domain"/>
    <property type="match status" value="1"/>
</dbReference>
<dbReference type="HAMAP" id="MF_01209">
    <property type="entry name" value="CPSase_S_chain"/>
    <property type="match status" value="1"/>
</dbReference>
<dbReference type="InterPro" id="IPR050472">
    <property type="entry name" value="Anth_synth/Amidotransfase"/>
</dbReference>
<dbReference type="InterPro" id="IPR006274">
    <property type="entry name" value="CarbamoylP_synth_ssu"/>
</dbReference>
<dbReference type="InterPro" id="IPR002474">
    <property type="entry name" value="CarbamoylP_synth_ssu_N"/>
</dbReference>
<dbReference type="InterPro" id="IPR036480">
    <property type="entry name" value="CarbP_synth_ssu_N_sf"/>
</dbReference>
<dbReference type="InterPro" id="IPR029062">
    <property type="entry name" value="Class_I_gatase-like"/>
</dbReference>
<dbReference type="InterPro" id="IPR035686">
    <property type="entry name" value="CPSase_GATase1"/>
</dbReference>
<dbReference type="InterPro" id="IPR017926">
    <property type="entry name" value="GATASE"/>
</dbReference>
<dbReference type="NCBIfam" id="TIGR01368">
    <property type="entry name" value="CPSaseIIsmall"/>
    <property type="match status" value="1"/>
</dbReference>
<dbReference type="NCBIfam" id="NF009475">
    <property type="entry name" value="PRK12838.1"/>
    <property type="match status" value="1"/>
</dbReference>
<dbReference type="PANTHER" id="PTHR43418:SF7">
    <property type="entry name" value="CARBAMOYL-PHOSPHATE SYNTHASE SMALL CHAIN"/>
    <property type="match status" value="1"/>
</dbReference>
<dbReference type="PANTHER" id="PTHR43418">
    <property type="entry name" value="MULTIFUNCTIONAL TRYPTOPHAN BIOSYNTHESIS PROTEIN-RELATED"/>
    <property type="match status" value="1"/>
</dbReference>
<dbReference type="Pfam" id="PF00988">
    <property type="entry name" value="CPSase_sm_chain"/>
    <property type="match status" value="1"/>
</dbReference>
<dbReference type="Pfam" id="PF00117">
    <property type="entry name" value="GATase"/>
    <property type="match status" value="1"/>
</dbReference>
<dbReference type="PRINTS" id="PR00097">
    <property type="entry name" value="ANTSNTHASEII"/>
</dbReference>
<dbReference type="PRINTS" id="PR00099">
    <property type="entry name" value="CPSGATASE"/>
</dbReference>
<dbReference type="PRINTS" id="PR00096">
    <property type="entry name" value="GATASE"/>
</dbReference>
<dbReference type="SMART" id="SM01097">
    <property type="entry name" value="CPSase_sm_chain"/>
    <property type="match status" value="1"/>
</dbReference>
<dbReference type="SUPFAM" id="SSF52021">
    <property type="entry name" value="Carbamoyl phosphate synthetase, small subunit N-terminal domain"/>
    <property type="match status" value="1"/>
</dbReference>
<dbReference type="SUPFAM" id="SSF52317">
    <property type="entry name" value="Class I glutamine amidotransferase-like"/>
    <property type="match status" value="1"/>
</dbReference>
<dbReference type="PROSITE" id="PS51273">
    <property type="entry name" value="GATASE_TYPE_1"/>
    <property type="match status" value="1"/>
</dbReference>
<sequence length="407" mass="43468">MTETTPKTAPWTVQKRTAVLVLADGTVIEGKGLGATGAVEAEVVFNTALTGYEEILTDPSYAGQIVTFTFPHIGNVGANAEDIEDLTPANRHGAVGAIFKADITAPSNFRAAEDLDSWLKHRGIIALAGIDTRALTALIRERGAQNAVIAHDPNGNFDLDALKARAANWCGLENLDLAKDVTIGQSLVWKELPWTLQDGYGEQDAPQYHVVALDFGVKRNILRLLTGLGAKVTVLPATATAEDVLAHNPDGVFLSNGPGDPAATGEYAVPTIGKLVETGIPLFGICLGHQMLALALGGRTEKMHQGHHGANHPVKDYTTGKVEIVSMNHGFAVDSDSLPENVEETHVSLFDGTNCGLRVVGKPVFSVQHHPEASPGPQDSHYLFRRFINLIRERKGQAPLPESEQAA</sequence>
<comment type="function">
    <text evidence="1">Small subunit of the glutamine-dependent carbamoyl phosphate synthetase (CPSase). CPSase catalyzes the formation of carbamoyl phosphate from the ammonia moiety of glutamine, carbonate, and phosphate donated by ATP, constituting the first step of 2 biosynthetic pathways, one leading to arginine and/or urea and the other to pyrimidine nucleotides. The small subunit (glutamine amidotransferase) binds and cleaves glutamine to supply the large subunit with the substrate ammonia.</text>
</comment>
<comment type="catalytic activity">
    <reaction evidence="1">
        <text>hydrogencarbonate + L-glutamine + 2 ATP + H2O = carbamoyl phosphate + L-glutamate + 2 ADP + phosphate + 2 H(+)</text>
        <dbReference type="Rhea" id="RHEA:18633"/>
        <dbReference type="ChEBI" id="CHEBI:15377"/>
        <dbReference type="ChEBI" id="CHEBI:15378"/>
        <dbReference type="ChEBI" id="CHEBI:17544"/>
        <dbReference type="ChEBI" id="CHEBI:29985"/>
        <dbReference type="ChEBI" id="CHEBI:30616"/>
        <dbReference type="ChEBI" id="CHEBI:43474"/>
        <dbReference type="ChEBI" id="CHEBI:58228"/>
        <dbReference type="ChEBI" id="CHEBI:58359"/>
        <dbReference type="ChEBI" id="CHEBI:456216"/>
        <dbReference type="EC" id="6.3.5.5"/>
    </reaction>
</comment>
<comment type="catalytic activity">
    <molecule>Carbamoyl phosphate synthase small chain</molecule>
    <reaction evidence="1">
        <text>L-glutamine + H2O = L-glutamate + NH4(+)</text>
        <dbReference type="Rhea" id="RHEA:15889"/>
        <dbReference type="ChEBI" id="CHEBI:15377"/>
        <dbReference type="ChEBI" id="CHEBI:28938"/>
        <dbReference type="ChEBI" id="CHEBI:29985"/>
        <dbReference type="ChEBI" id="CHEBI:58359"/>
    </reaction>
</comment>
<comment type="pathway">
    <text evidence="1">Amino-acid biosynthesis; L-arginine biosynthesis; carbamoyl phosphate from bicarbonate: step 1/1.</text>
</comment>
<comment type="pathway">
    <text evidence="1">Pyrimidine metabolism; UMP biosynthesis via de novo pathway; (S)-dihydroorotate from bicarbonate: step 1/3.</text>
</comment>
<comment type="subunit">
    <text evidence="1">Composed of two chains; the small (or glutamine) chain promotes the hydrolysis of glutamine to ammonia, which is used by the large (or ammonia) chain to synthesize carbamoyl phosphate. Tetramer of heterodimers (alpha,beta)4.</text>
</comment>
<comment type="similarity">
    <text evidence="1">Belongs to the CarA family.</text>
</comment>